<keyword id="KW-0143">Chaperone</keyword>
<keyword id="KW-0963">Cytoplasm</keyword>
<keyword id="KW-0996">Nickel insertion</keyword>
<name>UREH_HELPH</name>
<comment type="function">
    <text evidence="1">Required for maturation of urease via the functional incorporation of the urease nickel metallocenter.</text>
</comment>
<comment type="subunit">
    <text evidence="1">UreH, UreF and UreG form a complex that acts as a GTP-hydrolysis-dependent molecular chaperone, activating the urease apoprotein by helping to assemble the nickel containing metallocenter of UreC. The UreE protein probably delivers the nickel.</text>
</comment>
<comment type="subcellular location">
    <subcellularLocation>
        <location evidence="1">Cytoplasm</location>
    </subcellularLocation>
</comment>
<comment type="similarity">
    <text evidence="1">Belongs to the UreD family.</text>
</comment>
<sequence length="265" mass="29617">MNTYAQESKLRLKTKIGADGRCVIEDNFFTPPFKLMAPFYPKDDLAEIMLLAVSPGLMKGDAQDVQLNIGPNCKLRITSQSFEKIHNTEDGFASRDMHIVVGENAFLDFAPFPLIPFENAHFKGNTTISLRSSSQLLYSEIIVAGRVACNELFQFNRLHTKISILQDEKPIYYDNTILDPKTTDMMNMCMFDGYTHYLNLVLVNCPIELSGVRGLIEESEGVDGAVSEIASSHLCVKALAKGSEPLLHLREKIARLITQTITPKI</sequence>
<gene>
    <name evidence="1" type="primary">ureH</name>
    <name type="ordered locus">HPAG1_0068</name>
</gene>
<organism>
    <name type="scientific">Helicobacter pylori (strain HPAG1)</name>
    <dbReference type="NCBI Taxonomy" id="357544"/>
    <lineage>
        <taxon>Bacteria</taxon>
        <taxon>Pseudomonadati</taxon>
        <taxon>Campylobacterota</taxon>
        <taxon>Epsilonproteobacteria</taxon>
        <taxon>Campylobacterales</taxon>
        <taxon>Helicobacteraceae</taxon>
        <taxon>Helicobacter</taxon>
    </lineage>
</organism>
<reference key="1">
    <citation type="journal article" date="2006" name="Proc. Natl. Acad. Sci. U.S.A.">
        <title>The complete genome sequence of a chronic atrophic gastritis Helicobacter pylori strain: evolution during disease progression.</title>
        <authorList>
            <person name="Oh J.D."/>
            <person name="Kling-Baeckhed H."/>
            <person name="Giannakis M."/>
            <person name="Xu J."/>
            <person name="Fulton R.S."/>
            <person name="Fulton L.A."/>
            <person name="Cordum H.S."/>
            <person name="Wang C."/>
            <person name="Elliott G."/>
            <person name="Edwards J."/>
            <person name="Mardis E.R."/>
            <person name="Engstrand L.G."/>
            <person name="Gordon J.I."/>
        </authorList>
    </citation>
    <scope>NUCLEOTIDE SEQUENCE [LARGE SCALE GENOMIC DNA]</scope>
    <source>
        <strain>HPAG1</strain>
    </source>
</reference>
<proteinExistence type="inferred from homology"/>
<evidence type="ECO:0000255" key="1">
    <source>
        <dbReference type="HAMAP-Rule" id="MF_01384"/>
    </source>
</evidence>
<protein>
    <recommendedName>
        <fullName evidence="1">Urease accessory protein UreH</fullName>
    </recommendedName>
</protein>
<feature type="chain" id="PRO_1000145094" description="Urease accessory protein UreH">
    <location>
        <begin position="1"/>
        <end position="265"/>
    </location>
</feature>
<dbReference type="EMBL" id="CP000241">
    <property type="protein sequence ID" value="ABF84135.1"/>
    <property type="molecule type" value="Genomic_DNA"/>
</dbReference>
<dbReference type="RefSeq" id="WP_001099421.1">
    <property type="nucleotide sequence ID" value="NC_008086.1"/>
</dbReference>
<dbReference type="SMR" id="Q1CV87"/>
<dbReference type="KEGG" id="hpa:HPAG1_0068"/>
<dbReference type="HOGENOM" id="CLU_056339_6_1_7"/>
<dbReference type="GO" id="GO:0005737">
    <property type="term" value="C:cytoplasm"/>
    <property type="evidence" value="ECO:0007669"/>
    <property type="project" value="UniProtKB-SubCell"/>
</dbReference>
<dbReference type="GO" id="GO:0016151">
    <property type="term" value="F:nickel cation binding"/>
    <property type="evidence" value="ECO:0007669"/>
    <property type="project" value="InterPro"/>
</dbReference>
<dbReference type="HAMAP" id="MF_01384">
    <property type="entry name" value="UreD"/>
    <property type="match status" value="1"/>
</dbReference>
<dbReference type="InterPro" id="IPR002669">
    <property type="entry name" value="UreD"/>
</dbReference>
<dbReference type="PANTHER" id="PTHR33643">
    <property type="entry name" value="UREASE ACCESSORY PROTEIN D"/>
    <property type="match status" value="1"/>
</dbReference>
<dbReference type="PANTHER" id="PTHR33643:SF1">
    <property type="entry name" value="UREASE ACCESSORY PROTEIN D"/>
    <property type="match status" value="1"/>
</dbReference>
<dbReference type="Pfam" id="PF01774">
    <property type="entry name" value="UreD"/>
    <property type="match status" value="1"/>
</dbReference>
<accession>Q1CV87</accession>